<protein>
    <recommendedName>
        <fullName evidence="1">Rhamnulose-1-phosphate aldolase</fullName>
        <ecNumber evidence="1">4.1.2.19</ecNumber>
    </recommendedName>
</protein>
<dbReference type="EC" id="4.1.2.19" evidence="1"/>
<dbReference type="EMBL" id="AE006468">
    <property type="protein sequence ID" value="AAL22885.1"/>
    <property type="molecule type" value="Genomic_DNA"/>
</dbReference>
<dbReference type="RefSeq" id="NP_462926.1">
    <property type="nucleotide sequence ID" value="NC_003197.2"/>
</dbReference>
<dbReference type="RefSeq" id="WP_001179685.1">
    <property type="nucleotide sequence ID" value="NC_003197.2"/>
</dbReference>
<dbReference type="SMR" id="Q8ZKS1"/>
<dbReference type="STRING" id="99287.STM4045"/>
<dbReference type="PaxDb" id="99287-STM4045"/>
<dbReference type="GeneID" id="1255572"/>
<dbReference type="KEGG" id="stm:STM4045"/>
<dbReference type="PATRIC" id="fig|99287.12.peg.4262"/>
<dbReference type="HOGENOM" id="CLU_076831_0_0_6"/>
<dbReference type="OMA" id="SHFMSHI"/>
<dbReference type="PhylomeDB" id="Q8ZKS1"/>
<dbReference type="BioCyc" id="SENT99287:STM4045-MONOMER"/>
<dbReference type="UniPathway" id="UPA00541">
    <property type="reaction ID" value="UER00603"/>
</dbReference>
<dbReference type="Proteomes" id="UP000001014">
    <property type="component" value="Chromosome"/>
</dbReference>
<dbReference type="GO" id="GO:0005829">
    <property type="term" value="C:cytosol"/>
    <property type="evidence" value="ECO:0000318"/>
    <property type="project" value="GO_Central"/>
</dbReference>
<dbReference type="GO" id="GO:0016832">
    <property type="term" value="F:aldehyde-lyase activity"/>
    <property type="evidence" value="ECO:0000318"/>
    <property type="project" value="GO_Central"/>
</dbReference>
<dbReference type="GO" id="GO:0046872">
    <property type="term" value="F:metal ion binding"/>
    <property type="evidence" value="ECO:0007669"/>
    <property type="project" value="UniProtKB-KW"/>
</dbReference>
<dbReference type="GO" id="GO:0008994">
    <property type="term" value="F:rhamnulose-1-phosphate aldolase activity"/>
    <property type="evidence" value="ECO:0007669"/>
    <property type="project" value="UniProtKB-UniRule"/>
</dbReference>
<dbReference type="GO" id="GO:0019323">
    <property type="term" value="P:pentose catabolic process"/>
    <property type="evidence" value="ECO:0000318"/>
    <property type="project" value="GO_Central"/>
</dbReference>
<dbReference type="GO" id="GO:0019301">
    <property type="term" value="P:rhamnose catabolic process"/>
    <property type="evidence" value="ECO:0007669"/>
    <property type="project" value="UniProtKB-UniRule"/>
</dbReference>
<dbReference type="CDD" id="cd00398">
    <property type="entry name" value="Aldolase_II"/>
    <property type="match status" value="1"/>
</dbReference>
<dbReference type="FunFam" id="3.40.225.10:FF:000006">
    <property type="entry name" value="Rhamnulose-1-phosphate aldolase"/>
    <property type="match status" value="1"/>
</dbReference>
<dbReference type="Gene3D" id="3.40.225.10">
    <property type="entry name" value="Class II aldolase/adducin N-terminal domain"/>
    <property type="match status" value="1"/>
</dbReference>
<dbReference type="HAMAP" id="MF_00770">
    <property type="entry name" value="RhaD"/>
    <property type="match status" value="1"/>
</dbReference>
<dbReference type="InterPro" id="IPR050197">
    <property type="entry name" value="Aldolase_class_II_sugar_metab"/>
</dbReference>
<dbReference type="InterPro" id="IPR001303">
    <property type="entry name" value="Aldolase_II/adducin_N"/>
</dbReference>
<dbReference type="InterPro" id="IPR036409">
    <property type="entry name" value="Aldolase_II/adducin_N_sf"/>
</dbReference>
<dbReference type="InterPro" id="IPR013447">
    <property type="entry name" value="Rhamnulose-1-P_Aldolase"/>
</dbReference>
<dbReference type="NCBIfam" id="NF002963">
    <property type="entry name" value="PRK03634.1"/>
    <property type="match status" value="1"/>
</dbReference>
<dbReference type="NCBIfam" id="TIGR02624">
    <property type="entry name" value="rhamnu_1P_ald"/>
    <property type="match status" value="1"/>
</dbReference>
<dbReference type="PANTHER" id="PTHR22789">
    <property type="entry name" value="FUCULOSE PHOSPHATE ALDOLASE"/>
    <property type="match status" value="1"/>
</dbReference>
<dbReference type="PANTHER" id="PTHR22789:SF16">
    <property type="entry name" value="RHAMNULOSE-1-PHOSPHATE ALDOLASE"/>
    <property type="match status" value="1"/>
</dbReference>
<dbReference type="Pfam" id="PF00596">
    <property type="entry name" value="Aldolase_II"/>
    <property type="match status" value="1"/>
</dbReference>
<dbReference type="SMART" id="SM01007">
    <property type="entry name" value="Aldolase_II"/>
    <property type="match status" value="1"/>
</dbReference>
<dbReference type="SUPFAM" id="SSF53639">
    <property type="entry name" value="AraD/HMP-PK domain-like"/>
    <property type="match status" value="1"/>
</dbReference>
<organism>
    <name type="scientific">Salmonella typhimurium (strain LT2 / SGSC1412 / ATCC 700720)</name>
    <dbReference type="NCBI Taxonomy" id="99287"/>
    <lineage>
        <taxon>Bacteria</taxon>
        <taxon>Pseudomonadati</taxon>
        <taxon>Pseudomonadota</taxon>
        <taxon>Gammaproteobacteria</taxon>
        <taxon>Enterobacterales</taxon>
        <taxon>Enterobacteriaceae</taxon>
        <taxon>Salmonella</taxon>
    </lineage>
</organism>
<reference key="1">
    <citation type="journal article" date="2001" name="Nature">
        <title>Complete genome sequence of Salmonella enterica serovar Typhimurium LT2.</title>
        <authorList>
            <person name="McClelland M."/>
            <person name="Sanderson K.E."/>
            <person name="Spieth J."/>
            <person name="Clifton S.W."/>
            <person name="Latreille P."/>
            <person name="Courtney L."/>
            <person name="Porwollik S."/>
            <person name="Ali J."/>
            <person name="Dante M."/>
            <person name="Du F."/>
            <person name="Hou S."/>
            <person name="Layman D."/>
            <person name="Leonard S."/>
            <person name="Nguyen C."/>
            <person name="Scott K."/>
            <person name="Holmes A."/>
            <person name="Grewal N."/>
            <person name="Mulvaney E."/>
            <person name="Ryan E."/>
            <person name="Sun H."/>
            <person name="Florea L."/>
            <person name="Miller W."/>
            <person name="Stoneking T."/>
            <person name="Nhan M."/>
            <person name="Waterston R."/>
            <person name="Wilson R.K."/>
        </authorList>
    </citation>
    <scope>NUCLEOTIDE SEQUENCE [LARGE SCALE GENOMIC DNA]</scope>
    <source>
        <strain>LT2 / SGSC1412 / ATCC 700720</strain>
    </source>
</reference>
<feature type="chain" id="PRO_0000209670" description="Rhamnulose-1-phosphate aldolase">
    <location>
        <begin position="1"/>
        <end position="275"/>
    </location>
</feature>
<feature type="active site" evidence="1">
    <location>
        <position position="117"/>
    </location>
</feature>
<feature type="binding site" evidence="1">
    <location>
        <position position="141"/>
    </location>
    <ligand>
        <name>Zn(2+)</name>
        <dbReference type="ChEBI" id="CHEBI:29105"/>
    </ligand>
</feature>
<feature type="binding site" evidence="1">
    <location>
        <position position="143"/>
    </location>
    <ligand>
        <name>Zn(2+)</name>
        <dbReference type="ChEBI" id="CHEBI:29105"/>
    </ligand>
</feature>
<feature type="binding site" evidence="1">
    <location>
        <position position="212"/>
    </location>
    <ligand>
        <name>Zn(2+)</name>
        <dbReference type="ChEBI" id="CHEBI:29105"/>
    </ligand>
</feature>
<gene>
    <name evidence="1" type="primary">rhaD</name>
    <name type="ordered locus">STM4045</name>
</gene>
<accession>Q8ZKS1</accession>
<keyword id="KW-0963">Cytoplasm</keyword>
<keyword id="KW-0456">Lyase</keyword>
<keyword id="KW-0479">Metal-binding</keyword>
<keyword id="KW-1185">Reference proteome</keyword>
<keyword id="KW-0684">Rhamnose metabolism</keyword>
<keyword id="KW-0862">Zinc</keyword>
<sequence>MQNITDSWFVQGMIKATSDAWLKGWDERNGGNLTLRLDEADIAPFAANFHEKPRYIALSQPMPLLANTPFIVTGSGKFFRNVQLDPAANLGVVKIDSDGAGYHILWGLTHDAVPTSELPAHFLSHCERIKATHGKDRVIMHCHATNLIALTYVLENNTALITRKLWEGSTECLVVFPDGVGILPWMVPGTDEIGQATAQEMQKHSLVLWPFHGVFGSGPTLDETFGLIDTAEKSAEVLVKIYSMGGMKQTITREELVALGKRFGVTPLASAVALY</sequence>
<evidence type="ECO:0000255" key="1">
    <source>
        <dbReference type="HAMAP-Rule" id="MF_00770"/>
    </source>
</evidence>
<proteinExistence type="inferred from homology"/>
<comment type="function">
    <text evidence="1">Catalyzes the reversible cleavage of L-rhamnulose-1-phosphate to dihydroxyacetone phosphate (DHAP) and L-lactaldehyde.</text>
</comment>
<comment type="catalytic activity">
    <reaction evidence="1">
        <text>L-rhamnulose 1-phosphate = (S)-lactaldehyde + dihydroxyacetone phosphate</text>
        <dbReference type="Rhea" id="RHEA:19689"/>
        <dbReference type="ChEBI" id="CHEBI:18041"/>
        <dbReference type="ChEBI" id="CHEBI:57642"/>
        <dbReference type="ChEBI" id="CHEBI:58313"/>
        <dbReference type="EC" id="4.1.2.19"/>
    </reaction>
</comment>
<comment type="cofactor">
    <cofactor evidence="1">
        <name>Zn(2+)</name>
        <dbReference type="ChEBI" id="CHEBI:29105"/>
    </cofactor>
    <text evidence="1">Binds 1 zinc ion per subunit.</text>
</comment>
<comment type="pathway">
    <text evidence="1">Carbohydrate degradation; L-rhamnose degradation; glycerone phosphate from L-rhamnose: step 3/3.</text>
</comment>
<comment type="subunit">
    <text evidence="1">Homotetramer.</text>
</comment>
<comment type="subcellular location">
    <subcellularLocation>
        <location evidence="1">Cytoplasm</location>
    </subcellularLocation>
</comment>
<comment type="similarity">
    <text evidence="1">Belongs to the aldolase class II family. RhaD subfamily.</text>
</comment>
<name>RHAD_SALTY</name>